<sequence>MKTKLNELLEFPTPFTYKVMGQALPELVDQVVEVVQRHAPGDYSPSVKPSSKGNYHSVSITINATHIEQVETLYEELGNIDIVRMVL</sequence>
<evidence type="ECO:0000255" key="1">
    <source>
        <dbReference type="HAMAP-Rule" id="MF_00659"/>
    </source>
</evidence>
<organism>
    <name type="scientific">Klebsiella pneumoniae (strain 342)</name>
    <dbReference type="NCBI Taxonomy" id="507522"/>
    <lineage>
        <taxon>Bacteria</taxon>
        <taxon>Pseudomonadati</taxon>
        <taxon>Pseudomonadota</taxon>
        <taxon>Gammaproteobacteria</taxon>
        <taxon>Enterobacterales</taxon>
        <taxon>Enterobacteriaceae</taxon>
        <taxon>Klebsiella/Raoultella group</taxon>
        <taxon>Klebsiella</taxon>
        <taxon>Klebsiella pneumoniae complex</taxon>
    </lineage>
</organism>
<protein>
    <recommendedName>
        <fullName evidence="1">UPF0250 protein KPK_3910</fullName>
    </recommendedName>
</protein>
<accession>B5XZS3</accession>
<gene>
    <name type="ordered locus">KPK_3910</name>
</gene>
<feature type="chain" id="PRO_1000131248" description="UPF0250 protein KPK_3910">
    <location>
        <begin position="1"/>
        <end position="87"/>
    </location>
</feature>
<comment type="similarity">
    <text evidence="1">Belongs to the UPF0250 family.</text>
</comment>
<name>Y3910_KLEP3</name>
<dbReference type="EMBL" id="CP000964">
    <property type="protein sequence ID" value="ACI07133.1"/>
    <property type="molecule type" value="Genomic_DNA"/>
</dbReference>
<dbReference type="SMR" id="B5XZS3"/>
<dbReference type="KEGG" id="kpe:KPK_3910"/>
<dbReference type="HOGENOM" id="CLU_161438_2_1_6"/>
<dbReference type="BioCyc" id="KPNE507522:GI0B-3892-MONOMER"/>
<dbReference type="Proteomes" id="UP000001734">
    <property type="component" value="Chromosome"/>
</dbReference>
<dbReference type="GO" id="GO:0005829">
    <property type="term" value="C:cytosol"/>
    <property type="evidence" value="ECO:0007669"/>
    <property type="project" value="TreeGrafter"/>
</dbReference>
<dbReference type="FunFam" id="3.30.70.260:FF:000002">
    <property type="entry name" value="UPF0250 protein YbeD"/>
    <property type="match status" value="1"/>
</dbReference>
<dbReference type="Gene3D" id="3.30.70.260">
    <property type="match status" value="1"/>
</dbReference>
<dbReference type="HAMAP" id="MF_00659">
    <property type="entry name" value="UPF0250"/>
    <property type="match status" value="1"/>
</dbReference>
<dbReference type="InterPro" id="IPR007454">
    <property type="entry name" value="UPF0250_YbeD-like"/>
</dbReference>
<dbReference type="InterPro" id="IPR027471">
    <property type="entry name" value="YbeD-like_sf"/>
</dbReference>
<dbReference type="NCBIfam" id="NF003447">
    <property type="entry name" value="PRK04998.1"/>
    <property type="match status" value="1"/>
</dbReference>
<dbReference type="PANTHER" id="PTHR38036">
    <property type="entry name" value="UPF0250 PROTEIN YBED"/>
    <property type="match status" value="1"/>
</dbReference>
<dbReference type="PANTHER" id="PTHR38036:SF1">
    <property type="entry name" value="UPF0250 PROTEIN YBED"/>
    <property type="match status" value="1"/>
</dbReference>
<dbReference type="Pfam" id="PF04359">
    <property type="entry name" value="DUF493"/>
    <property type="match status" value="1"/>
</dbReference>
<dbReference type="SUPFAM" id="SSF117991">
    <property type="entry name" value="YbeD/HP0495-like"/>
    <property type="match status" value="1"/>
</dbReference>
<proteinExistence type="inferred from homology"/>
<reference key="1">
    <citation type="journal article" date="2008" name="PLoS Genet.">
        <title>Complete genome sequence of the N2-fixing broad host range endophyte Klebsiella pneumoniae 342 and virulence predictions verified in mice.</title>
        <authorList>
            <person name="Fouts D.E."/>
            <person name="Tyler H.L."/>
            <person name="DeBoy R.T."/>
            <person name="Daugherty S."/>
            <person name="Ren Q."/>
            <person name="Badger J.H."/>
            <person name="Durkin A.S."/>
            <person name="Huot H."/>
            <person name="Shrivastava S."/>
            <person name="Kothari S."/>
            <person name="Dodson R.J."/>
            <person name="Mohamoud Y."/>
            <person name="Khouri H."/>
            <person name="Roesch L.F.W."/>
            <person name="Krogfelt K.A."/>
            <person name="Struve C."/>
            <person name="Triplett E.W."/>
            <person name="Methe B.A."/>
        </authorList>
    </citation>
    <scope>NUCLEOTIDE SEQUENCE [LARGE SCALE GENOMIC DNA]</scope>
    <source>
        <strain>342</strain>
    </source>
</reference>